<sequence>MMEGSRQTRVSRPYKISESSKVYRWAEHSGTVLQRLNEQRLRGLFCDVVLVADEQRLPAHRNLLAVCSDYFNSMFTLGMREAFQKEVELIGASYIGLKAVVDFLYGGELVLDGGNIDYVLETAHLLQIWTAVDFCCEYLEQEVSEDNYLYLQELASIYSLKRLDAFIDSFILSRFGTLSFTPAFLQNISMQKLCAYLGSSEVQRECEHDLLQAALQWLTQQPEREAHAYQVLENIHFPLIPKNDLLHRVKPAVCSLLPREANCEGFIEEAVRYHNSLAAQPVMQTKRTALRTTQECLLFVGGEVSERCLELSDDTCYLDAQSEQWVKETPLPARRSHHCVAVLGGFIFIAGGSFSRDNGGDAASNLLYRYDPRCKQWIKVASMNQRRVDFYLASIEDMLVAVGGRNENGALSSVETYSPKTDSWSYVAGLPRFTYGHAGTIYKDFVYISGGHDYQIGPYRKNLLCYDHRTDVWEERRPMSTARGWHSMCSLGDSIYSIGGSDDSLESMERFDVLGVEAYSPQCNQWTRVAPLLHANSESGVAVWEGRIYILGGYSWENTAFSKTVQVYDRDKDKWSEGTELPKAIAGVSACVCALKPRLEDKKKKGKGKRPQDHGQ</sequence>
<protein>
    <recommendedName>
        <fullName>Kelch-like protein 36</fullName>
    </recommendedName>
</protein>
<feature type="chain" id="PRO_0000274690" description="Kelch-like protein 36">
    <location>
        <begin position="1"/>
        <end position="616"/>
    </location>
</feature>
<feature type="domain" description="BTB" evidence="2">
    <location>
        <begin position="46"/>
        <end position="113"/>
    </location>
</feature>
<feature type="domain" description="BACK">
    <location>
        <begin position="148"/>
        <end position="250"/>
    </location>
</feature>
<feature type="repeat" description="Kelch 1">
    <location>
        <begin position="296"/>
        <end position="345"/>
    </location>
</feature>
<feature type="repeat" description="Kelch 2">
    <location>
        <begin position="346"/>
        <end position="397"/>
    </location>
</feature>
<feature type="repeat" description="Kelch 3">
    <location>
        <begin position="398"/>
        <end position="444"/>
    </location>
</feature>
<feature type="repeat" description="Kelch 4">
    <location>
        <begin position="446"/>
        <end position="493"/>
    </location>
</feature>
<feature type="repeat" description="Kelch 5">
    <location>
        <begin position="494"/>
        <end position="546"/>
    </location>
</feature>
<feature type="repeat" description="Kelch 6">
    <location>
        <begin position="547"/>
        <end position="595"/>
    </location>
</feature>
<keyword id="KW-0880">Kelch repeat</keyword>
<keyword id="KW-1185">Reference proteome</keyword>
<keyword id="KW-0677">Repeat</keyword>
<keyword id="KW-0833">Ubl conjugation pathway</keyword>
<gene>
    <name type="primary">KLHL36</name>
</gene>
<evidence type="ECO:0000250" key="1"/>
<evidence type="ECO:0000255" key="2">
    <source>
        <dbReference type="PROSITE-ProRule" id="PRU00037"/>
    </source>
</evidence>
<organism>
    <name type="scientific">Bos taurus</name>
    <name type="common">Bovine</name>
    <dbReference type="NCBI Taxonomy" id="9913"/>
    <lineage>
        <taxon>Eukaryota</taxon>
        <taxon>Metazoa</taxon>
        <taxon>Chordata</taxon>
        <taxon>Craniata</taxon>
        <taxon>Vertebrata</taxon>
        <taxon>Euteleostomi</taxon>
        <taxon>Mammalia</taxon>
        <taxon>Eutheria</taxon>
        <taxon>Laurasiatheria</taxon>
        <taxon>Artiodactyla</taxon>
        <taxon>Ruminantia</taxon>
        <taxon>Pecora</taxon>
        <taxon>Bovidae</taxon>
        <taxon>Bovinae</taxon>
        <taxon>Bos</taxon>
    </lineage>
</organism>
<dbReference type="EMBL" id="BC107546">
    <property type="protein sequence ID" value="AAI07547.1"/>
    <property type="molecule type" value="mRNA"/>
</dbReference>
<dbReference type="RefSeq" id="NP_001070586.1">
    <property type="nucleotide sequence ID" value="NM_001077118.1"/>
</dbReference>
<dbReference type="RefSeq" id="XP_024834382.1">
    <property type="nucleotide sequence ID" value="XM_024978614.2"/>
</dbReference>
<dbReference type="SMR" id="Q3B7M1"/>
<dbReference type="FunCoup" id="Q3B7M1">
    <property type="interactions" value="2205"/>
</dbReference>
<dbReference type="STRING" id="9913.ENSBTAP00000011036"/>
<dbReference type="PaxDb" id="9913-ENSBTAP00000011036"/>
<dbReference type="Ensembl" id="ENSBTAT00000011036.5">
    <property type="protein sequence ID" value="ENSBTAP00000011036.4"/>
    <property type="gene ID" value="ENSBTAG00000008385.6"/>
</dbReference>
<dbReference type="GeneID" id="768061"/>
<dbReference type="KEGG" id="bta:768061"/>
<dbReference type="CTD" id="79786"/>
<dbReference type="VEuPathDB" id="HostDB:ENSBTAG00000008385"/>
<dbReference type="VGNC" id="VGNC:30662">
    <property type="gene designation" value="KLHL36"/>
</dbReference>
<dbReference type="eggNOG" id="KOG4441">
    <property type="taxonomic scope" value="Eukaryota"/>
</dbReference>
<dbReference type="GeneTree" id="ENSGT00940000157543"/>
<dbReference type="HOGENOM" id="CLU_004253_14_3_1"/>
<dbReference type="InParanoid" id="Q3B7M1"/>
<dbReference type="OMA" id="RPAEDRW"/>
<dbReference type="OrthoDB" id="6611570at2759"/>
<dbReference type="UniPathway" id="UPA00143"/>
<dbReference type="Proteomes" id="UP000009136">
    <property type="component" value="Chromosome 18"/>
</dbReference>
<dbReference type="Bgee" id="ENSBTAG00000008385">
    <property type="expression patterns" value="Expressed in oocyte and 105 other cell types or tissues"/>
</dbReference>
<dbReference type="GO" id="GO:0097602">
    <property type="term" value="F:cullin family protein binding"/>
    <property type="evidence" value="ECO:0000318"/>
    <property type="project" value="GO_Central"/>
</dbReference>
<dbReference type="GO" id="GO:0016567">
    <property type="term" value="P:protein ubiquitination"/>
    <property type="evidence" value="ECO:0007669"/>
    <property type="project" value="UniProtKB-UniPathway"/>
</dbReference>
<dbReference type="CDD" id="cd18475">
    <property type="entry name" value="BACK_KLHL36"/>
    <property type="match status" value="1"/>
</dbReference>
<dbReference type="CDD" id="cd18266">
    <property type="entry name" value="BTB_POZ_KLHL36"/>
    <property type="match status" value="1"/>
</dbReference>
<dbReference type="Gene3D" id="1.25.40.420">
    <property type="match status" value="1"/>
</dbReference>
<dbReference type="Gene3D" id="2.120.10.80">
    <property type="entry name" value="Kelch-type beta propeller"/>
    <property type="match status" value="1"/>
</dbReference>
<dbReference type="Gene3D" id="3.30.710.10">
    <property type="entry name" value="Potassium Channel Kv1.1, Chain A"/>
    <property type="match status" value="1"/>
</dbReference>
<dbReference type="InterPro" id="IPR011705">
    <property type="entry name" value="BACK"/>
</dbReference>
<dbReference type="InterPro" id="IPR017096">
    <property type="entry name" value="BTB-kelch_protein"/>
</dbReference>
<dbReference type="InterPro" id="IPR000210">
    <property type="entry name" value="BTB/POZ_dom"/>
</dbReference>
<dbReference type="InterPro" id="IPR015915">
    <property type="entry name" value="Kelch-typ_b-propeller"/>
</dbReference>
<dbReference type="InterPro" id="IPR006652">
    <property type="entry name" value="Kelch_1"/>
</dbReference>
<dbReference type="InterPro" id="IPR011333">
    <property type="entry name" value="SKP1/BTB/POZ_sf"/>
</dbReference>
<dbReference type="PANTHER" id="PTHR45632:SF4">
    <property type="entry name" value="KELCH-LIKE PROTEIN 36"/>
    <property type="match status" value="1"/>
</dbReference>
<dbReference type="PANTHER" id="PTHR45632">
    <property type="entry name" value="LD33804P"/>
    <property type="match status" value="1"/>
</dbReference>
<dbReference type="Pfam" id="PF07707">
    <property type="entry name" value="BACK"/>
    <property type="match status" value="1"/>
</dbReference>
<dbReference type="Pfam" id="PF00651">
    <property type="entry name" value="BTB"/>
    <property type="match status" value="1"/>
</dbReference>
<dbReference type="Pfam" id="PF01344">
    <property type="entry name" value="Kelch_1"/>
    <property type="match status" value="2"/>
</dbReference>
<dbReference type="Pfam" id="PF24681">
    <property type="entry name" value="Kelch_KLHDC2_KLHL20_DRC7"/>
    <property type="match status" value="1"/>
</dbReference>
<dbReference type="PIRSF" id="PIRSF037037">
    <property type="entry name" value="Kelch-like_protein_gigaxonin"/>
    <property type="match status" value="1"/>
</dbReference>
<dbReference type="SMART" id="SM00875">
    <property type="entry name" value="BACK"/>
    <property type="match status" value="1"/>
</dbReference>
<dbReference type="SMART" id="SM00225">
    <property type="entry name" value="BTB"/>
    <property type="match status" value="1"/>
</dbReference>
<dbReference type="SMART" id="SM00612">
    <property type="entry name" value="Kelch"/>
    <property type="match status" value="6"/>
</dbReference>
<dbReference type="SUPFAM" id="SSF117281">
    <property type="entry name" value="Kelch motif"/>
    <property type="match status" value="1"/>
</dbReference>
<dbReference type="SUPFAM" id="SSF54695">
    <property type="entry name" value="POZ domain"/>
    <property type="match status" value="1"/>
</dbReference>
<dbReference type="PROSITE" id="PS50097">
    <property type="entry name" value="BTB"/>
    <property type="match status" value="1"/>
</dbReference>
<name>KLH36_BOVIN</name>
<accession>Q3B7M1</accession>
<proteinExistence type="evidence at transcript level"/>
<comment type="function">
    <text evidence="1">Probable substrate-specific adapter of an E3 ubiquitin-protein ligase complex which mediates the ubiquitination and subsequent proteasomal degradation of target proteins.</text>
</comment>
<comment type="pathway">
    <text>Protein modification; protein ubiquitination.</text>
</comment>
<comment type="subunit">
    <text evidence="1">Interacts with CUL3.</text>
</comment>
<reference key="1">
    <citation type="submission" date="2005-10" db="EMBL/GenBank/DDBJ databases">
        <authorList>
            <consortium name="NIH - Mammalian Gene Collection (MGC) project"/>
        </authorList>
    </citation>
    <scope>NUCLEOTIDE SEQUENCE [LARGE SCALE MRNA]</scope>
    <source>
        <strain>Hereford</strain>
        <tissue>Heart ventricle</tissue>
    </source>
</reference>